<dbReference type="EMBL" id="CP001186">
    <property type="protein sequence ID" value="ACK93722.1"/>
    <property type="molecule type" value="Genomic_DNA"/>
</dbReference>
<dbReference type="RefSeq" id="WP_000531505.1">
    <property type="nucleotide sequence ID" value="NC_011772.1"/>
</dbReference>
<dbReference type="SMR" id="B7IUI3"/>
<dbReference type="GeneID" id="92799906"/>
<dbReference type="KEGG" id="bcg:BCG9842_B1321"/>
<dbReference type="HOGENOM" id="CLU_073981_2_0_9"/>
<dbReference type="Proteomes" id="UP000006744">
    <property type="component" value="Chromosome"/>
</dbReference>
<dbReference type="GO" id="GO:0005737">
    <property type="term" value="C:cytoplasm"/>
    <property type="evidence" value="ECO:0007669"/>
    <property type="project" value="UniProtKB-SubCell"/>
</dbReference>
<dbReference type="GO" id="GO:0043023">
    <property type="term" value="F:ribosomal large subunit binding"/>
    <property type="evidence" value="ECO:0007669"/>
    <property type="project" value="TreeGrafter"/>
</dbReference>
<dbReference type="GO" id="GO:0006415">
    <property type="term" value="P:translational termination"/>
    <property type="evidence" value="ECO:0007669"/>
    <property type="project" value="UniProtKB-UniRule"/>
</dbReference>
<dbReference type="CDD" id="cd00520">
    <property type="entry name" value="RRF"/>
    <property type="match status" value="1"/>
</dbReference>
<dbReference type="FunFam" id="1.10.132.20:FF:000001">
    <property type="entry name" value="Ribosome-recycling factor"/>
    <property type="match status" value="1"/>
</dbReference>
<dbReference type="FunFam" id="3.30.1360.40:FF:000001">
    <property type="entry name" value="Ribosome-recycling factor"/>
    <property type="match status" value="1"/>
</dbReference>
<dbReference type="Gene3D" id="3.30.1360.40">
    <property type="match status" value="1"/>
</dbReference>
<dbReference type="Gene3D" id="1.10.132.20">
    <property type="entry name" value="Ribosome-recycling factor"/>
    <property type="match status" value="1"/>
</dbReference>
<dbReference type="HAMAP" id="MF_00040">
    <property type="entry name" value="RRF"/>
    <property type="match status" value="1"/>
</dbReference>
<dbReference type="InterPro" id="IPR002661">
    <property type="entry name" value="Ribosome_recyc_fac"/>
</dbReference>
<dbReference type="InterPro" id="IPR023584">
    <property type="entry name" value="Ribosome_recyc_fac_dom"/>
</dbReference>
<dbReference type="InterPro" id="IPR036191">
    <property type="entry name" value="RRF_sf"/>
</dbReference>
<dbReference type="NCBIfam" id="TIGR00496">
    <property type="entry name" value="frr"/>
    <property type="match status" value="1"/>
</dbReference>
<dbReference type="PANTHER" id="PTHR20982:SF3">
    <property type="entry name" value="MITOCHONDRIAL RIBOSOME RECYCLING FACTOR PSEUDO 1"/>
    <property type="match status" value="1"/>
</dbReference>
<dbReference type="PANTHER" id="PTHR20982">
    <property type="entry name" value="RIBOSOME RECYCLING FACTOR"/>
    <property type="match status" value="1"/>
</dbReference>
<dbReference type="Pfam" id="PF01765">
    <property type="entry name" value="RRF"/>
    <property type="match status" value="1"/>
</dbReference>
<dbReference type="SUPFAM" id="SSF55194">
    <property type="entry name" value="Ribosome recycling factor, RRF"/>
    <property type="match status" value="1"/>
</dbReference>
<reference key="1">
    <citation type="submission" date="2008-10" db="EMBL/GenBank/DDBJ databases">
        <title>Genome sequence of Bacillus cereus G9842.</title>
        <authorList>
            <person name="Dodson R.J."/>
            <person name="Durkin A.S."/>
            <person name="Rosovitz M.J."/>
            <person name="Rasko D.A."/>
            <person name="Hoffmaster A."/>
            <person name="Ravel J."/>
            <person name="Sutton G."/>
        </authorList>
    </citation>
    <scope>NUCLEOTIDE SEQUENCE [LARGE SCALE GENOMIC DNA]</scope>
    <source>
        <strain>G9842</strain>
    </source>
</reference>
<comment type="function">
    <text evidence="1">Responsible for the release of ribosomes from messenger RNA at the termination of protein biosynthesis. May increase the efficiency of translation by recycling ribosomes from one round of translation to another.</text>
</comment>
<comment type="subcellular location">
    <subcellularLocation>
        <location evidence="1">Cytoplasm</location>
    </subcellularLocation>
</comment>
<comment type="similarity">
    <text evidence="1">Belongs to the RRF family.</text>
</comment>
<protein>
    <recommendedName>
        <fullName evidence="1">Ribosome-recycling factor</fullName>
        <shortName evidence="1">RRF</shortName>
    </recommendedName>
    <alternativeName>
        <fullName evidence="1">Ribosome-releasing factor</fullName>
    </alternativeName>
</protein>
<name>RRF_BACC2</name>
<evidence type="ECO:0000255" key="1">
    <source>
        <dbReference type="HAMAP-Rule" id="MF_00040"/>
    </source>
</evidence>
<gene>
    <name evidence="1" type="primary">frr</name>
    <name type="ordered locus">BCG9842_B1321</name>
</gene>
<feature type="chain" id="PRO_1000194899" description="Ribosome-recycling factor">
    <location>
        <begin position="1"/>
        <end position="185"/>
    </location>
</feature>
<keyword id="KW-0963">Cytoplasm</keyword>
<keyword id="KW-0648">Protein biosynthesis</keyword>
<accession>B7IUI3</accession>
<organism>
    <name type="scientific">Bacillus cereus (strain G9842)</name>
    <dbReference type="NCBI Taxonomy" id="405531"/>
    <lineage>
        <taxon>Bacteria</taxon>
        <taxon>Bacillati</taxon>
        <taxon>Bacillota</taxon>
        <taxon>Bacilli</taxon>
        <taxon>Bacillales</taxon>
        <taxon>Bacillaceae</taxon>
        <taxon>Bacillus</taxon>
        <taxon>Bacillus cereus group</taxon>
    </lineage>
</organism>
<proteinExistence type="inferred from homology"/>
<sequence length="185" mass="20636">MGQQVLKSSNEKMEKAVAAYSRELATVRAGRASSSVLDKVQVDYYGAPTPVVQLANITVPEARLLVIQPYDKTSIGDIEKAILKADLGLNPSNDGTVIRIAFPALTEERRRDLVKVVKKYAEEAKVAVRNVRRDGNDDLKKLEKAGEITEDDLRGYTEDIQKETDKYIAKVDEIAKNKEKEIMEV</sequence>